<reference key="1">
    <citation type="journal article" date="1998" name="DNA Res.">
        <title>Prediction of the coding sequences of unidentified human genes. XII. The complete sequences of 100 new cDNA clones from brain which code for large proteins in vitro.</title>
        <authorList>
            <person name="Nagase T."/>
            <person name="Ishikawa K."/>
            <person name="Suyama M."/>
            <person name="Kikuno R."/>
            <person name="Hirosawa M."/>
            <person name="Miyajima N."/>
            <person name="Tanaka A."/>
            <person name="Kotani H."/>
            <person name="Nomura N."/>
            <person name="Ohara O."/>
        </authorList>
    </citation>
    <scope>NUCLEOTIDE SEQUENCE [LARGE SCALE MRNA] (ISOFORM 1)</scope>
    <source>
        <tissue>Brain</tissue>
    </source>
</reference>
<reference key="2">
    <citation type="journal article" date="2004" name="Nat. Genet.">
        <title>Complete sequencing and characterization of 21,243 full-length human cDNAs.</title>
        <authorList>
            <person name="Ota T."/>
            <person name="Suzuki Y."/>
            <person name="Nishikawa T."/>
            <person name="Otsuki T."/>
            <person name="Sugiyama T."/>
            <person name="Irie R."/>
            <person name="Wakamatsu A."/>
            <person name="Hayashi K."/>
            <person name="Sato H."/>
            <person name="Nagai K."/>
            <person name="Kimura K."/>
            <person name="Makita H."/>
            <person name="Sekine M."/>
            <person name="Obayashi M."/>
            <person name="Nishi T."/>
            <person name="Shibahara T."/>
            <person name="Tanaka T."/>
            <person name="Ishii S."/>
            <person name="Yamamoto J."/>
            <person name="Saito K."/>
            <person name="Kawai Y."/>
            <person name="Isono Y."/>
            <person name="Nakamura Y."/>
            <person name="Nagahari K."/>
            <person name="Murakami K."/>
            <person name="Yasuda T."/>
            <person name="Iwayanagi T."/>
            <person name="Wagatsuma M."/>
            <person name="Shiratori A."/>
            <person name="Sudo H."/>
            <person name="Hosoiri T."/>
            <person name="Kaku Y."/>
            <person name="Kodaira H."/>
            <person name="Kondo H."/>
            <person name="Sugawara M."/>
            <person name="Takahashi M."/>
            <person name="Kanda K."/>
            <person name="Yokoi T."/>
            <person name="Furuya T."/>
            <person name="Kikkawa E."/>
            <person name="Omura Y."/>
            <person name="Abe K."/>
            <person name="Kamihara K."/>
            <person name="Katsuta N."/>
            <person name="Sato K."/>
            <person name="Tanikawa M."/>
            <person name="Yamazaki M."/>
            <person name="Ninomiya K."/>
            <person name="Ishibashi T."/>
            <person name="Yamashita H."/>
            <person name="Murakawa K."/>
            <person name="Fujimori K."/>
            <person name="Tanai H."/>
            <person name="Kimata M."/>
            <person name="Watanabe M."/>
            <person name="Hiraoka S."/>
            <person name="Chiba Y."/>
            <person name="Ishida S."/>
            <person name="Ono Y."/>
            <person name="Takiguchi S."/>
            <person name="Watanabe S."/>
            <person name="Yosida M."/>
            <person name="Hotuta T."/>
            <person name="Kusano J."/>
            <person name="Kanehori K."/>
            <person name="Takahashi-Fujii A."/>
            <person name="Hara H."/>
            <person name="Tanase T.-O."/>
            <person name="Nomura Y."/>
            <person name="Togiya S."/>
            <person name="Komai F."/>
            <person name="Hara R."/>
            <person name="Takeuchi K."/>
            <person name="Arita M."/>
            <person name="Imose N."/>
            <person name="Musashino K."/>
            <person name="Yuuki H."/>
            <person name="Oshima A."/>
            <person name="Sasaki N."/>
            <person name="Aotsuka S."/>
            <person name="Yoshikawa Y."/>
            <person name="Matsunawa H."/>
            <person name="Ichihara T."/>
            <person name="Shiohata N."/>
            <person name="Sano S."/>
            <person name="Moriya S."/>
            <person name="Momiyama H."/>
            <person name="Satoh N."/>
            <person name="Takami S."/>
            <person name="Terashima Y."/>
            <person name="Suzuki O."/>
            <person name="Nakagawa S."/>
            <person name="Senoh A."/>
            <person name="Mizoguchi H."/>
            <person name="Goto Y."/>
            <person name="Shimizu F."/>
            <person name="Wakebe H."/>
            <person name="Hishigaki H."/>
            <person name="Watanabe T."/>
            <person name="Sugiyama A."/>
            <person name="Takemoto M."/>
            <person name="Kawakami B."/>
            <person name="Yamazaki M."/>
            <person name="Watanabe K."/>
            <person name="Kumagai A."/>
            <person name="Itakura S."/>
            <person name="Fukuzumi Y."/>
            <person name="Fujimori Y."/>
            <person name="Komiyama M."/>
            <person name="Tashiro H."/>
            <person name="Tanigami A."/>
            <person name="Fujiwara T."/>
            <person name="Ono T."/>
            <person name="Yamada K."/>
            <person name="Fujii Y."/>
            <person name="Ozaki K."/>
            <person name="Hirao M."/>
            <person name="Ohmori Y."/>
            <person name="Kawabata A."/>
            <person name="Hikiji T."/>
            <person name="Kobatake N."/>
            <person name="Inagaki H."/>
            <person name="Ikema Y."/>
            <person name="Okamoto S."/>
            <person name="Okitani R."/>
            <person name="Kawakami T."/>
            <person name="Noguchi S."/>
            <person name="Itoh T."/>
            <person name="Shigeta K."/>
            <person name="Senba T."/>
            <person name="Matsumura K."/>
            <person name="Nakajima Y."/>
            <person name="Mizuno T."/>
            <person name="Morinaga M."/>
            <person name="Sasaki M."/>
            <person name="Togashi T."/>
            <person name="Oyama M."/>
            <person name="Hata H."/>
            <person name="Watanabe M."/>
            <person name="Komatsu T."/>
            <person name="Mizushima-Sugano J."/>
            <person name="Satoh T."/>
            <person name="Shirai Y."/>
            <person name="Takahashi Y."/>
            <person name="Nakagawa K."/>
            <person name="Okumura K."/>
            <person name="Nagase T."/>
            <person name="Nomura N."/>
            <person name="Kikuchi H."/>
            <person name="Masuho Y."/>
            <person name="Yamashita R."/>
            <person name="Nakai K."/>
            <person name="Yada T."/>
            <person name="Nakamura Y."/>
            <person name="Ohara O."/>
            <person name="Isogai T."/>
            <person name="Sugano S."/>
        </authorList>
    </citation>
    <scope>NUCLEOTIDE SEQUENCE [LARGE SCALE MRNA] (ISOFORM 1)</scope>
    <source>
        <tissue>Hippocampus</tissue>
    </source>
</reference>
<reference key="3">
    <citation type="journal article" date="2007" name="BMC Genomics">
        <title>The full-ORF clone resource of the German cDNA consortium.</title>
        <authorList>
            <person name="Bechtel S."/>
            <person name="Rosenfelder H."/>
            <person name="Duda A."/>
            <person name="Schmidt C.P."/>
            <person name="Ernst U."/>
            <person name="Wellenreuther R."/>
            <person name="Mehrle A."/>
            <person name="Schuster C."/>
            <person name="Bahr A."/>
            <person name="Bloecker H."/>
            <person name="Heubner D."/>
            <person name="Hoerlein A."/>
            <person name="Michel G."/>
            <person name="Wedler H."/>
            <person name="Koehrer K."/>
            <person name="Ottenwaelder B."/>
            <person name="Poustka A."/>
            <person name="Wiemann S."/>
            <person name="Schupp I."/>
        </authorList>
    </citation>
    <scope>NUCLEOTIDE SEQUENCE [LARGE SCALE MRNA] (ISOFORM 2)</scope>
    <source>
        <tissue>Endometrium</tissue>
    </source>
</reference>
<reference key="4">
    <citation type="journal article" date="2009" name="Anal. Chem.">
        <title>Lys-N and trypsin cover complementary parts of the phosphoproteome in a refined SCX-based approach.</title>
        <authorList>
            <person name="Gauci S."/>
            <person name="Helbig A.O."/>
            <person name="Slijper M."/>
            <person name="Krijgsveld J."/>
            <person name="Heck A.J."/>
            <person name="Mohammed S."/>
        </authorList>
    </citation>
    <scope>IDENTIFICATION BY MASS SPECTROMETRY [LARGE SCALE ANALYSIS]</scope>
</reference>
<reference key="5">
    <citation type="journal article" date="2009" name="Sci. Signal.">
        <title>Quantitative phosphoproteomic analysis of T cell receptor signaling reveals system-wide modulation of protein-protein interactions.</title>
        <authorList>
            <person name="Mayya V."/>
            <person name="Lundgren D.H."/>
            <person name="Hwang S.-I."/>
            <person name="Rezaul K."/>
            <person name="Wu L."/>
            <person name="Eng J.K."/>
            <person name="Rodionov V."/>
            <person name="Han D.K."/>
        </authorList>
    </citation>
    <scope>PHOSPHORYLATION [LARGE SCALE ANALYSIS] AT SER-449</scope>
    <scope>IDENTIFICATION BY MASS SPECTROMETRY [LARGE SCALE ANALYSIS]</scope>
    <source>
        <tissue>Leukemic T-cell</tissue>
    </source>
</reference>
<reference key="6">
    <citation type="journal article" date="2011" name="BMC Syst. Biol.">
        <title>Initial characterization of the human central proteome.</title>
        <authorList>
            <person name="Burkard T.R."/>
            <person name="Planyavsky M."/>
            <person name="Kaupe I."/>
            <person name="Breitwieser F.P."/>
            <person name="Buerckstuemmer T."/>
            <person name="Bennett K.L."/>
            <person name="Superti-Furga G."/>
            <person name="Colinge J."/>
        </authorList>
    </citation>
    <scope>IDENTIFICATION BY MASS SPECTROMETRY [LARGE SCALE ANALYSIS]</scope>
</reference>
<reference key="7">
    <citation type="journal article" date="2011" name="Sci. Signal.">
        <title>System-wide temporal characterization of the proteome and phosphoproteome of human embryonic stem cell differentiation.</title>
        <authorList>
            <person name="Rigbolt K.T."/>
            <person name="Prokhorova T.A."/>
            <person name="Akimov V."/>
            <person name="Henningsen J."/>
            <person name="Johansen P.T."/>
            <person name="Kratchmarova I."/>
            <person name="Kassem M."/>
            <person name="Mann M."/>
            <person name="Olsen J.V."/>
            <person name="Blagoev B."/>
        </authorList>
    </citation>
    <scope>PHOSPHORYLATION [LARGE SCALE ANALYSIS] AT SER-635</scope>
    <scope>IDENTIFICATION BY MASS SPECTROMETRY [LARGE SCALE ANALYSIS]</scope>
</reference>
<reference key="8">
    <citation type="journal article" date="2012" name="J. Cell Biol.">
        <title>A promiscuous biotin ligase fusion protein identifies proximal and interacting proteins in mammalian cells.</title>
        <authorList>
            <person name="Roux K.J."/>
            <person name="Kim D.I."/>
            <person name="Raida M."/>
            <person name="Burke B."/>
        </authorList>
    </citation>
    <scope>SUBCELLULAR LOCATION</scope>
</reference>
<reference key="9">
    <citation type="journal article" date="2014" name="J. Proteomics">
        <title>An enzyme assisted RP-RPLC approach for in-depth analysis of human liver phosphoproteome.</title>
        <authorList>
            <person name="Bian Y."/>
            <person name="Song C."/>
            <person name="Cheng K."/>
            <person name="Dong M."/>
            <person name="Wang F."/>
            <person name="Huang J."/>
            <person name="Sun D."/>
            <person name="Wang L."/>
            <person name="Ye M."/>
            <person name="Zou H."/>
        </authorList>
    </citation>
    <scope>IDENTIFICATION BY MASS SPECTROMETRY [LARGE SCALE ANALYSIS]</scope>
    <source>
        <tissue>Liver</tissue>
    </source>
</reference>
<comment type="interaction">
    <interactant intactId="EBI-1220497">
        <id>Q9Y6X4</id>
    </interactant>
    <interactant intactId="EBI-968218">
        <id>P20700</id>
        <label>LMNB1</label>
    </interactant>
    <organismsDiffer>false</organismsDiffer>
    <experiments>3</experiments>
</comment>
<comment type="interaction">
    <interactant intactId="EBI-1220497">
        <id>Q9Y6X4</id>
    </interactant>
    <interactant intactId="EBI-744593">
        <id>Q96QG7</id>
        <label>MTMR9</label>
    </interactant>
    <organismsDiffer>false</organismsDiffer>
    <experiments>3</experiments>
</comment>
<comment type="subcellular location">
    <subcellularLocation>
        <location evidence="3">Nucleus envelope</location>
    </subcellularLocation>
    <subcellularLocation>
        <location evidence="3">Nucleus inner membrane</location>
        <topology evidence="3">Peripheral membrane protein</topology>
        <orientation evidence="3">Nucleoplasmic side</orientation>
    </subcellularLocation>
    <text>Enriched at the nuclear lamina.</text>
</comment>
<comment type="alternative products">
    <event type="alternative splicing"/>
    <isoform>
        <id>Q9Y6X4-1</id>
        <name>1</name>
        <sequence type="displayed"/>
    </isoform>
    <isoform>
        <id>Q9Y6X4-2</id>
        <name>2</name>
        <sequence type="described" ref="VSP_031670 VSP_031671"/>
    </isoform>
</comment>
<comment type="similarity">
    <text evidence="5">Belongs to the FAM169 family.</text>
</comment>
<comment type="sequence caution" evidence="5">
    <conflict type="erroneous initiation">
        <sequence resource="EMBL-CDS" id="BAA74911"/>
    </conflict>
    <text>Extended N-terminus.</text>
</comment>
<comment type="sequence caution" evidence="5">
    <conflict type="erroneous initiation">
        <sequence resource="EMBL-CDS" id="BAB14344"/>
    </conflict>
    <text>Truncated N-terminus.</text>
</comment>
<comment type="sequence caution" evidence="5">
    <conflict type="erroneous initiation">
        <sequence resource="EMBL-CDS" id="CAE45948"/>
    </conflict>
    <text>Extended N-terminus.</text>
</comment>
<organism>
    <name type="scientific">Homo sapiens</name>
    <name type="common">Human</name>
    <dbReference type="NCBI Taxonomy" id="9606"/>
    <lineage>
        <taxon>Eukaryota</taxon>
        <taxon>Metazoa</taxon>
        <taxon>Chordata</taxon>
        <taxon>Craniata</taxon>
        <taxon>Vertebrata</taxon>
        <taxon>Euteleostomi</taxon>
        <taxon>Mammalia</taxon>
        <taxon>Eutheria</taxon>
        <taxon>Euarchontoglires</taxon>
        <taxon>Primates</taxon>
        <taxon>Haplorrhini</taxon>
        <taxon>Catarrhini</taxon>
        <taxon>Hominidae</taxon>
        <taxon>Homo</taxon>
    </lineage>
</organism>
<name>F169A_HUMAN</name>
<feature type="chain" id="PRO_0000320587" description="Soluble lamin-associated protein of 75 kDa">
    <location>
        <begin position="1"/>
        <end position="670"/>
    </location>
</feature>
<feature type="region of interest" description="Disordered" evidence="2">
    <location>
        <begin position="273"/>
        <end position="301"/>
    </location>
</feature>
<feature type="region of interest" description="Disordered" evidence="2">
    <location>
        <begin position="314"/>
        <end position="670"/>
    </location>
</feature>
<feature type="compositionally biased region" description="Polar residues" evidence="2">
    <location>
        <begin position="358"/>
        <end position="375"/>
    </location>
</feature>
<feature type="compositionally biased region" description="Acidic residues" evidence="2">
    <location>
        <begin position="378"/>
        <end position="387"/>
    </location>
</feature>
<feature type="compositionally biased region" description="Basic and acidic residues" evidence="2">
    <location>
        <begin position="414"/>
        <end position="423"/>
    </location>
</feature>
<feature type="compositionally biased region" description="Acidic residues" evidence="2">
    <location>
        <begin position="442"/>
        <end position="453"/>
    </location>
</feature>
<feature type="compositionally biased region" description="Polar residues" evidence="2">
    <location>
        <begin position="460"/>
        <end position="470"/>
    </location>
</feature>
<feature type="compositionally biased region" description="Basic and acidic residues" evidence="2">
    <location>
        <begin position="479"/>
        <end position="494"/>
    </location>
</feature>
<feature type="compositionally biased region" description="Basic and acidic residues" evidence="2">
    <location>
        <begin position="504"/>
        <end position="514"/>
    </location>
</feature>
<feature type="compositionally biased region" description="Polar residues" evidence="2">
    <location>
        <begin position="558"/>
        <end position="569"/>
    </location>
</feature>
<feature type="compositionally biased region" description="Polar residues" evidence="2">
    <location>
        <begin position="579"/>
        <end position="591"/>
    </location>
</feature>
<feature type="compositionally biased region" description="Basic residues" evidence="2">
    <location>
        <begin position="651"/>
        <end position="670"/>
    </location>
</feature>
<feature type="modified residue" description="Phosphoserine" evidence="1">
    <location>
        <position position="350"/>
    </location>
</feature>
<feature type="modified residue" description="Phosphoserine" evidence="1">
    <location>
        <position position="379"/>
    </location>
</feature>
<feature type="modified residue" description="Phosphoserine" evidence="6">
    <location>
        <position position="449"/>
    </location>
</feature>
<feature type="modified residue" description="Phosphoserine" evidence="1">
    <location>
        <position position="515"/>
    </location>
</feature>
<feature type="modified residue" description="Phosphoserine" evidence="1">
    <location>
        <position position="615"/>
    </location>
</feature>
<feature type="modified residue" description="Phosphoserine" evidence="1">
    <location>
        <position position="618"/>
    </location>
</feature>
<feature type="modified residue" description="Phosphoserine" evidence="7">
    <location>
        <position position="635"/>
    </location>
</feature>
<feature type="splice variant" id="VSP_031670" description="In isoform 2." evidence="4">
    <original>VSTLGERVVLYVLNRIIYRKQ</original>
    <variation>EAYVPLFLPKVTNCQFLIQCF</variation>
    <location>
        <begin position="107"/>
        <end position="127"/>
    </location>
</feature>
<feature type="splice variant" id="VSP_031671" description="In isoform 2." evidence="4">
    <location>
        <begin position="128"/>
        <end position="670"/>
    </location>
</feature>
<feature type="sequence conflict" description="In Ref. 2; BAF82693." evidence="5" ref="2">
    <original>R</original>
    <variation>G</variation>
    <location>
        <position position="275"/>
    </location>
</feature>
<keyword id="KW-0025">Alternative splicing</keyword>
<keyword id="KW-0472">Membrane</keyword>
<keyword id="KW-0539">Nucleus</keyword>
<keyword id="KW-0597">Phosphoprotein</keyword>
<keyword id="KW-1267">Proteomics identification</keyword>
<keyword id="KW-1185">Reference proteome</keyword>
<dbReference type="EMBL" id="AB020695">
    <property type="protein sequence ID" value="BAA74911.1"/>
    <property type="status" value="ALT_INIT"/>
    <property type="molecule type" value="mRNA"/>
</dbReference>
<dbReference type="EMBL" id="AK022981">
    <property type="protein sequence ID" value="BAB14344.1"/>
    <property type="status" value="ALT_INIT"/>
    <property type="molecule type" value="mRNA"/>
</dbReference>
<dbReference type="EMBL" id="AK290004">
    <property type="protein sequence ID" value="BAF82693.1"/>
    <property type="molecule type" value="mRNA"/>
</dbReference>
<dbReference type="EMBL" id="BX640902">
    <property type="protein sequence ID" value="CAE45948.1"/>
    <property type="status" value="ALT_INIT"/>
    <property type="molecule type" value="mRNA"/>
</dbReference>
<dbReference type="CCDS" id="CCDS43330.1">
    <molecule id="Q9Y6X4-1"/>
</dbReference>
<dbReference type="RefSeq" id="NP_001362978.1">
    <molecule id="Q9Y6X4-1"/>
    <property type="nucleotide sequence ID" value="NM_001376049.1"/>
</dbReference>
<dbReference type="RefSeq" id="NP_001362979.1">
    <molecule id="Q9Y6X4-1"/>
    <property type="nucleotide sequence ID" value="NM_001376050.1"/>
</dbReference>
<dbReference type="RefSeq" id="NP_001362980.1">
    <molecule id="Q9Y6X4-1"/>
    <property type="nucleotide sequence ID" value="NM_001376051.1"/>
</dbReference>
<dbReference type="RefSeq" id="NP_001362981.1">
    <molecule id="Q9Y6X4-1"/>
    <property type="nucleotide sequence ID" value="NM_001376052.1"/>
</dbReference>
<dbReference type="RefSeq" id="NP_056381.1">
    <molecule id="Q9Y6X4-1"/>
    <property type="nucleotide sequence ID" value="NM_015566.3"/>
</dbReference>
<dbReference type="RefSeq" id="XP_005248537.1">
    <property type="nucleotide sequence ID" value="XM_005248480.2"/>
</dbReference>
<dbReference type="RefSeq" id="XP_011541608.1">
    <property type="nucleotide sequence ID" value="XM_011543306.2"/>
</dbReference>
<dbReference type="RefSeq" id="XP_011541609.1">
    <property type="nucleotide sequence ID" value="XM_011543307.2"/>
</dbReference>
<dbReference type="RefSeq" id="XP_047273040.1">
    <molecule id="Q9Y6X4-1"/>
    <property type="nucleotide sequence ID" value="XM_047417084.1"/>
</dbReference>
<dbReference type="RefSeq" id="XP_047273041.1">
    <molecule id="Q9Y6X4-1"/>
    <property type="nucleotide sequence ID" value="XM_047417085.1"/>
</dbReference>
<dbReference type="RefSeq" id="XP_047273042.1">
    <molecule id="Q9Y6X4-1"/>
    <property type="nucleotide sequence ID" value="XM_047417086.1"/>
</dbReference>
<dbReference type="RefSeq" id="XP_054208309.1">
    <molecule id="Q9Y6X4-1"/>
    <property type="nucleotide sequence ID" value="XM_054352334.1"/>
</dbReference>
<dbReference type="RefSeq" id="XP_054208310.1">
    <molecule id="Q9Y6X4-1"/>
    <property type="nucleotide sequence ID" value="XM_054352335.1"/>
</dbReference>
<dbReference type="RefSeq" id="XP_054208311.1">
    <molecule id="Q9Y6X4-1"/>
    <property type="nucleotide sequence ID" value="XM_054352336.1"/>
</dbReference>
<dbReference type="BioGRID" id="117512">
    <property type="interactions" value="35"/>
</dbReference>
<dbReference type="FunCoup" id="Q9Y6X4">
    <property type="interactions" value="287"/>
</dbReference>
<dbReference type="IntAct" id="Q9Y6X4">
    <property type="interactions" value="8"/>
</dbReference>
<dbReference type="MINT" id="Q9Y6X4"/>
<dbReference type="STRING" id="9606.ENSP00000373808"/>
<dbReference type="iPTMnet" id="Q9Y6X4"/>
<dbReference type="MetOSite" id="Q9Y6X4"/>
<dbReference type="PhosphoSitePlus" id="Q9Y6X4"/>
<dbReference type="SwissPalm" id="Q9Y6X4"/>
<dbReference type="BioMuta" id="FAM169A"/>
<dbReference type="DMDM" id="189031482"/>
<dbReference type="jPOST" id="Q9Y6X4"/>
<dbReference type="MassIVE" id="Q9Y6X4"/>
<dbReference type="PaxDb" id="9606-ENSP00000373808"/>
<dbReference type="PeptideAtlas" id="Q9Y6X4"/>
<dbReference type="ProteomicsDB" id="86814">
    <molecule id="Q9Y6X4-1"/>
</dbReference>
<dbReference type="ProteomicsDB" id="86815">
    <molecule id="Q9Y6X4-2"/>
</dbReference>
<dbReference type="Pumba" id="Q9Y6X4"/>
<dbReference type="Antibodypedia" id="48666">
    <property type="antibodies" value="10 antibodies from 9 providers"/>
</dbReference>
<dbReference type="DNASU" id="26049"/>
<dbReference type="Ensembl" id="ENST00000389156.9">
    <molecule id="Q9Y6X4-1"/>
    <property type="protein sequence ID" value="ENSP00000373808.4"/>
    <property type="gene ID" value="ENSG00000198780.13"/>
</dbReference>
<dbReference type="Ensembl" id="ENST00000510609.5">
    <molecule id="Q9Y6X4-2"/>
    <property type="protein sequence ID" value="ENSP00000423905.1"/>
    <property type="gene ID" value="ENSG00000198780.13"/>
</dbReference>
<dbReference type="Ensembl" id="ENST00000514215.5">
    <molecule id="Q9Y6X4-2"/>
    <property type="protein sequence ID" value="ENSP00000425319.1"/>
    <property type="gene ID" value="ENSG00000198780.13"/>
</dbReference>
<dbReference type="Ensembl" id="ENST00000687041.1">
    <molecule id="Q9Y6X4-1"/>
    <property type="protein sequence ID" value="ENSP00000508577.1"/>
    <property type="gene ID" value="ENSG00000198780.13"/>
</dbReference>
<dbReference type="GeneID" id="26049"/>
<dbReference type="KEGG" id="hsa:26049"/>
<dbReference type="MANE-Select" id="ENST00000687041.1">
    <property type="protein sequence ID" value="ENSP00000508577.1"/>
    <property type="RefSeq nucleotide sequence ID" value="NM_001376049.1"/>
    <property type="RefSeq protein sequence ID" value="NP_001362978.1"/>
</dbReference>
<dbReference type="UCSC" id="uc003kdm.4">
    <molecule id="Q9Y6X4-1"/>
    <property type="organism name" value="human"/>
</dbReference>
<dbReference type="AGR" id="HGNC:29138"/>
<dbReference type="CTD" id="26049"/>
<dbReference type="DisGeNET" id="26049"/>
<dbReference type="GeneCards" id="FAM169A"/>
<dbReference type="HGNC" id="HGNC:29138">
    <property type="gene designation" value="FAM169A"/>
</dbReference>
<dbReference type="HPA" id="ENSG00000198780">
    <property type="expression patterns" value="Tissue enriched (retina)"/>
</dbReference>
<dbReference type="MIM" id="615769">
    <property type="type" value="gene"/>
</dbReference>
<dbReference type="neXtProt" id="NX_Q9Y6X4"/>
<dbReference type="OpenTargets" id="ENSG00000198780"/>
<dbReference type="PharmGKB" id="PA162387117"/>
<dbReference type="VEuPathDB" id="HostDB:ENSG00000198780"/>
<dbReference type="eggNOG" id="ENOG502QPRQ">
    <property type="taxonomic scope" value="Eukaryota"/>
</dbReference>
<dbReference type="GeneTree" id="ENSGT00510000048902"/>
<dbReference type="HOGENOM" id="CLU_1969795_0_0_1"/>
<dbReference type="InParanoid" id="Q9Y6X4"/>
<dbReference type="OMA" id="DQTHKVL"/>
<dbReference type="OrthoDB" id="8954808at2759"/>
<dbReference type="PAN-GO" id="Q9Y6X4">
    <property type="GO annotations" value="0 GO annotations based on evolutionary models"/>
</dbReference>
<dbReference type="PhylomeDB" id="Q9Y6X4"/>
<dbReference type="TreeFam" id="TF332578"/>
<dbReference type="PathwayCommons" id="Q9Y6X4"/>
<dbReference type="Reactome" id="R-HSA-9035034">
    <property type="pathway name" value="RHOF GTPase cycle"/>
</dbReference>
<dbReference type="SignaLink" id="Q9Y6X4"/>
<dbReference type="BioGRID-ORCS" id="26049">
    <property type="hits" value="12 hits in 1145 CRISPR screens"/>
</dbReference>
<dbReference type="ChiTaRS" id="FAM169A">
    <property type="organism name" value="human"/>
</dbReference>
<dbReference type="GenomeRNAi" id="26049"/>
<dbReference type="Pharos" id="Q9Y6X4">
    <property type="development level" value="Tdark"/>
</dbReference>
<dbReference type="PRO" id="PR:Q9Y6X4"/>
<dbReference type="Proteomes" id="UP000005640">
    <property type="component" value="Chromosome 5"/>
</dbReference>
<dbReference type="RNAct" id="Q9Y6X4">
    <property type="molecule type" value="protein"/>
</dbReference>
<dbReference type="Bgee" id="ENSG00000198780">
    <property type="expression patterns" value="Expressed in caput epididymis and 166 other cell types or tissues"/>
</dbReference>
<dbReference type="ExpressionAtlas" id="Q9Y6X4">
    <property type="expression patterns" value="baseline and differential"/>
</dbReference>
<dbReference type="GO" id="GO:0005637">
    <property type="term" value="C:nuclear inner membrane"/>
    <property type="evidence" value="ECO:0007669"/>
    <property type="project" value="UniProtKB-SubCell"/>
</dbReference>
<dbReference type="InterPro" id="IPR029625">
    <property type="entry name" value="FAM169"/>
</dbReference>
<dbReference type="PANTHER" id="PTHR22442">
    <property type="match status" value="1"/>
</dbReference>
<dbReference type="PANTHER" id="PTHR22442:SF3">
    <property type="entry name" value="SOLUBLE LAMIN-ASSOCIATED PROTEIN OF 75 KDA"/>
    <property type="match status" value="1"/>
</dbReference>
<proteinExistence type="evidence at protein level"/>
<protein>
    <recommendedName>
        <fullName>Soluble lamin-associated protein of 75 kDa</fullName>
        <shortName>SLAP75</shortName>
    </recommendedName>
    <alternativeName>
        <fullName>Protein FAM169A</fullName>
    </alternativeName>
</protein>
<sequence length="670" mass="74955">MAFPVDMLENCSHEELENSAEDYMSDLRCGDPENPECFSLLNITIPISLSNVGFVPLYGGDQTQKILALFAPEDSLTAVALYLADQWWAIDDIVKTSVPSREGLKQVSTLGERVVLYVLNRIIYRKQEMERNEIPFLCHSSTDYAKILWKKGEAIGFYSVKPTGSICASFLTQSYQLPVLDTMFLRKKYRGKDFGLHMLEDFVDSFTEDALGLRYPLSSLMYTACKQYFEKYPGDHELLWEVEGVGHWYQRIPVTRALQREALKILALSQNEPKRPMSGEYGPASVPEYEARTEDNQSSEMQLTIDSLKDAFASTSEGHDKTSVSTHTRSGNLKRPKIGKRFQDSEFSSSQGEDEKTSQTSLTASINKLESTARPSESSEEFLEEEPEQRGIEFEDESSDRDARPALETQPQQEKQDGEKESELEPMNGEIMDDSLKTSLITEEEDSTSEVLDEELKLQPFNSSEDSTNLVPLVVESSKPPEVDAPDKTPRIPDSEMLMDEGTSDEKGHMEEKLSLLPRKKAHLGSSDNVATMSNEERSDGGFPNSVIAEFSEEPVSENLSPNTTSSLEDQGEEGVSEPQETSTALPQSSLIEVELEDVPFSQNAGQKNQSEEQSEASSEQLDQFTQSAEKAVDSSSEEIEVEVPVVDRRNLRRKAKGHKGPAKKKAKLT</sequence>
<accession>Q9Y6X4</accession>
<accession>A8K1T9</accession>
<accession>Q6MZT0</accession>
<accession>Q9H989</accession>
<evidence type="ECO:0000250" key="1">
    <source>
        <dbReference type="UniProtKB" id="Q5XG69"/>
    </source>
</evidence>
<evidence type="ECO:0000256" key="2">
    <source>
        <dbReference type="SAM" id="MobiDB-lite"/>
    </source>
</evidence>
<evidence type="ECO:0000269" key="3">
    <source>
    </source>
</evidence>
<evidence type="ECO:0000303" key="4">
    <source>
    </source>
</evidence>
<evidence type="ECO:0000305" key="5"/>
<evidence type="ECO:0007744" key="6">
    <source>
    </source>
</evidence>
<evidence type="ECO:0007744" key="7">
    <source>
    </source>
</evidence>
<gene>
    <name type="primary">FAM169A</name>
    <name type="synonym">KIAA0888</name>
</gene>